<accession>P53608</accession>
<organism>
    <name type="scientific">Bacillus caldovelox</name>
    <dbReference type="NCBI Taxonomy" id="33931"/>
    <lineage>
        <taxon>Bacteria</taxon>
        <taxon>Bacillati</taxon>
        <taxon>Bacillota</taxon>
        <taxon>Bacilli</taxon>
        <taxon>Bacillales</taxon>
        <taxon>Anoxybacillaceae</taxon>
        <taxon>Geobacillus</taxon>
        <taxon>Geobacillus thermoleovorans group</taxon>
    </lineage>
</organism>
<protein>
    <recommendedName>
        <fullName>Arginase</fullName>
        <ecNumber evidence="2">3.5.3.1</ecNumber>
    </recommendedName>
</protein>
<reference key="1">
    <citation type="journal article" date="1996" name="FEBS Lett.">
        <title>The cloning, expression and crystallisation of a thermostable arginase.</title>
        <authorList>
            <person name="Bewley M.C."/>
            <person name="Lott J.S."/>
            <person name="Baker E.N."/>
            <person name="Patchett M.L."/>
        </authorList>
    </citation>
    <scope>NUCLEOTIDE SEQUENCE [GENOMIC DNA]</scope>
    <source>
        <strain>DSM 411 / NBRC 15315 / YT-F</strain>
    </source>
</reference>
<reference key="2">
    <citation type="journal article" date="1999" name="Structure">
        <title>Crystal structures of Bacillus caldovelox arginase in complex with substrate and inhibitors reveal new insights into activation, inhibition and catalysis in the arginase superfamily.</title>
        <authorList>
            <person name="Bewley M.C."/>
            <person name="Jeffrey P.D."/>
            <person name="Patchett M.L."/>
            <person name="Kanyo Z.F."/>
            <person name="Baker E.N."/>
        </authorList>
    </citation>
    <scope>X-RAY CRYSTALLOGRAPHY (2.15 ANGSTROMS) IN COMPLEXES WITH MANGANESE AND ARGININE</scope>
    <scope>COFACTOR</scope>
    <scope>SUBUNIT</scope>
    <source>
        <strain>DSM 411 / NBRC 15315 / YT-F</strain>
    </source>
</reference>
<name>ARGI_BACCD</name>
<gene>
    <name type="primary">rocF</name>
</gene>
<feature type="chain" id="PRO_0000173714" description="Arginase">
    <location>
        <begin position="1"/>
        <end position="299"/>
    </location>
</feature>
<feature type="binding site" evidence="4 5 6 7 8 9">
    <location>
        <position position="99"/>
    </location>
    <ligand>
        <name>Mn(2+)</name>
        <dbReference type="ChEBI" id="CHEBI:29035"/>
        <label>1</label>
    </ligand>
</feature>
<feature type="binding site" evidence="4 5 6 7 8 9">
    <location>
        <position position="122"/>
    </location>
    <ligand>
        <name>Mn(2+)</name>
        <dbReference type="ChEBI" id="CHEBI:29035"/>
        <label>1</label>
    </ligand>
</feature>
<feature type="binding site" evidence="4 5 6 8 9">
    <location>
        <position position="122"/>
    </location>
    <ligand>
        <name>Mn(2+)</name>
        <dbReference type="ChEBI" id="CHEBI:29035"/>
        <label>2</label>
    </ligand>
</feature>
<feature type="binding site" evidence="4 7 8 9">
    <location>
        <begin position="124"/>
        <end position="128"/>
    </location>
    <ligand>
        <name>substrate</name>
    </ligand>
</feature>
<feature type="binding site" evidence="4 5 6 8 9">
    <location>
        <position position="124"/>
    </location>
    <ligand>
        <name>Mn(2+)</name>
        <dbReference type="ChEBI" id="CHEBI:29035"/>
        <label>2</label>
    </ligand>
</feature>
<feature type="binding site" evidence="4 5 6 7 8 9">
    <location>
        <position position="126"/>
    </location>
    <ligand>
        <name>Mn(2+)</name>
        <dbReference type="ChEBI" id="CHEBI:29035"/>
        <label>1</label>
    </ligand>
</feature>
<feature type="binding site" evidence="4 7 8 9">
    <location>
        <begin position="135"/>
        <end position="137"/>
    </location>
    <ligand>
        <name>substrate</name>
    </ligand>
</feature>
<feature type="binding site" evidence="4 7 8 9">
    <location>
        <position position="178"/>
    </location>
    <ligand>
        <name>substrate</name>
    </ligand>
</feature>
<feature type="binding site" evidence="4 5 6 7 8 9">
    <location>
        <position position="226"/>
    </location>
    <ligand>
        <name>Mn(2+)</name>
        <dbReference type="ChEBI" id="CHEBI:29035"/>
        <label>1</label>
    </ligand>
</feature>
<feature type="binding site" evidence="4 5 6 8 9">
    <location>
        <position position="226"/>
    </location>
    <ligand>
        <name>Mn(2+)</name>
        <dbReference type="ChEBI" id="CHEBI:29035"/>
        <label>2</label>
    </ligand>
</feature>
<feature type="binding site" evidence="4 5 6 8 9">
    <location>
        <position position="228"/>
    </location>
    <ligand>
        <name>Mn(2+)</name>
        <dbReference type="ChEBI" id="CHEBI:29035"/>
        <label>2</label>
    </ligand>
</feature>
<feature type="binding site" evidence="4 7">
    <location>
        <position position="240"/>
    </location>
    <ligand>
        <name>substrate</name>
    </ligand>
</feature>
<feature type="binding site" evidence="4 7 9">
    <location>
        <position position="271"/>
    </location>
    <ligand>
        <name>substrate</name>
    </ligand>
</feature>
<feature type="strand" evidence="11">
    <location>
        <begin position="4"/>
        <end position="9"/>
    </location>
</feature>
<feature type="strand" evidence="10">
    <location>
        <begin position="14"/>
        <end position="16"/>
    </location>
</feature>
<feature type="helix" evidence="11">
    <location>
        <begin position="20"/>
        <end position="22"/>
    </location>
</feature>
<feature type="helix" evidence="11">
    <location>
        <begin position="23"/>
        <end position="29"/>
    </location>
</feature>
<feature type="helix" evidence="11">
    <location>
        <begin position="32"/>
        <end position="38"/>
    </location>
</feature>
<feature type="strand" evidence="11">
    <location>
        <begin position="43"/>
        <end position="48"/>
    </location>
</feature>
<feature type="turn" evidence="11">
    <location>
        <begin position="57"/>
        <end position="59"/>
    </location>
</feature>
<feature type="strand" evidence="11">
    <location>
        <begin position="60"/>
        <end position="62"/>
    </location>
</feature>
<feature type="strand" evidence="10">
    <location>
        <begin position="63"/>
        <end position="65"/>
    </location>
</feature>
<feature type="helix" evidence="11">
    <location>
        <begin position="68"/>
        <end position="87"/>
    </location>
</feature>
<feature type="strand" evidence="11">
    <location>
        <begin position="91"/>
        <end position="98"/>
    </location>
</feature>
<feature type="helix" evidence="11">
    <location>
        <begin position="99"/>
        <end position="101"/>
    </location>
</feature>
<feature type="helix" evidence="11">
    <location>
        <begin position="102"/>
        <end position="110"/>
    </location>
</feature>
<feature type="strand" evidence="11">
    <location>
        <begin position="114"/>
        <end position="124"/>
    </location>
</feature>
<feature type="turn" evidence="11">
    <location>
        <begin position="130"/>
        <end position="132"/>
    </location>
</feature>
<feature type="helix" evidence="11">
    <location>
        <begin position="138"/>
        <end position="140"/>
    </location>
</feature>
<feature type="helix" evidence="11">
    <location>
        <begin position="142"/>
        <end position="146"/>
    </location>
</feature>
<feature type="helix" evidence="11">
    <location>
        <begin position="152"/>
        <end position="155"/>
    </location>
</feature>
<feature type="helix" evidence="11">
    <location>
        <begin position="157"/>
        <end position="159"/>
    </location>
</feature>
<feature type="helix" evidence="11">
    <location>
        <begin position="166"/>
        <end position="168"/>
    </location>
</feature>
<feature type="strand" evidence="11">
    <location>
        <begin position="169"/>
        <end position="174"/>
    </location>
</feature>
<feature type="helix" evidence="11">
    <location>
        <begin position="179"/>
        <end position="188"/>
    </location>
</feature>
<feature type="strand" evidence="11">
    <location>
        <begin position="191"/>
        <end position="194"/>
    </location>
</feature>
<feature type="helix" evidence="11">
    <location>
        <begin position="195"/>
        <end position="201"/>
    </location>
</feature>
<feature type="helix" evidence="11">
    <location>
        <begin position="203"/>
        <end position="215"/>
    </location>
</feature>
<feature type="strand" evidence="11">
    <location>
        <begin position="219"/>
        <end position="226"/>
    </location>
</feature>
<feature type="helix" evidence="11">
    <location>
        <begin position="227"/>
        <end position="229"/>
    </location>
</feature>
<feature type="turn" evidence="11">
    <location>
        <begin position="232"/>
        <end position="234"/>
    </location>
</feature>
<feature type="strand" evidence="10">
    <location>
        <begin position="238"/>
        <end position="240"/>
    </location>
</feature>
<feature type="helix" evidence="11">
    <location>
        <begin position="248"/>
        <end position="261"/>
    </location>
</feature>
<feature type="strand" evidence="11">
    <location>
        <begin position="264"/>
        <end position="270"/>
    </location>
</feature>
<feature type="helix" evidence="11">
    <location>
        <begin position="274"/>
        <end position="276"/>
    </location>
</feature>
<feature type="helix" evidence="11">
    <location>
        <begin position="281"/>
        <end position="293"/>
    </location>
</feature>
<dbReference type="EC" id="3.5.3.1" evidence="2"/>
<dbReference type="EMBL" id="U48226">
    <property type="protein sequence ID" value="AAB06939.1"/>
    <property type="molecule type" value="Genomic_DNA"/>
</dbReference>
<dbReference type="PIR" id="S68863">
    <property type="entry name" value="S68863"/>
</dbReference>
<dbReference type="PDB" id="1CEV">
    <property type="method" value="X-ray"/>
    <property type="resolution" value="2.40 A"/>
    <property type="chains" value="A/B/C/D/E/F=1-299"/>
</dbReference>
<dbReference type="PDB" id="2CEV">
    <property type="method" value="X-ray"/>
    <property type="resolution" value="2.15 A"/>
    <property type="chains" value="A/B/C/D/E/F=1-299"/>
</dbReference>
<dbReference type="PDB" id="3CEV">
    <property type="method" value="X-ray"/>
    <property type="resolution" value="2.40 A"/>
    <property type="chains" value="A/B/C/D/E/F=1-299"/>
</dbReference>
<dbReference type="PDB" id="4CEV">
    <property type="method" value="X-ray"/>
    <property type="resolution" value="2.70 A"/>
    <property type="chains" value="A/B/C/D/E/F=1-299"/>
</dbReference>
<dbReference type="PDB" id="5CEV">
    <property type="method" value="X-ray"/>
    <property type="resolution" value="2.50 A"/>
    <property type="chains" value="A/B/C/D/E/F=1-299"/>
</dbReference>
<dbReference type="PDBsum" id="1CEV"/>
<dbReference type="PDBsum" id="2CEV"/>
<dbReference type="PDBsum" id="3CEV"/>
<dbReference type="PDBsum" id="4CEV"/>
<dbReference type="PDBsum" id="5CEV"/>
<dbReference type="SMR" id="P53608"/>
<dbReference type="DrugBank" id="DB00536">
    <property type="generic name" value="Guanidine"/>
</dbReference>
<dbReference type="BRENDA" id="3.5.3.1">
    <property type="organism ID" value="644"/>
</dbReference>
<dbReference type="SABIO-RK" id="P53608"/>
<dbReference type="UniPathway" id="UPA00158">
    <property type="reaction ID" value="UER00270"/>
</dbReference>
<dbReference type="EvolutionaryTrace" id="P53608"/>
<dbReference type="GO" id="GO:0005737">
    <property type="term" value="C:cytoplasm"/>
    <property type="evidence" value="ECO:0007669"/>
    <property type="project" value="TreeGrafter"/>
</dbReference>
<dbReference type="GO" id="GO:0004053">
    <property type="term" value="F:arginase activity"/>
    <property type="evidence" value="ECO:0007669"/>
    <property type="project" value="UniProtKB-EC"/>
</dbReference>
<dbReference type="GO" id="GO:0030145">
    <property type="term" value="F:manganese ion binding"/>
    <property type="evidence" value="ECO:0007669"/>
    <property type="project" value="TreeGrafter"/>
</dbReference>
<dbReference type="GO" id="GO:0019547">
    <property type="term" value="P:arginine catabolic process to ornithine"/>
    <property type="evidence" value="ECO:0007669"/>
    <property type="project" value="TreeGrafter"/>
</dbReference>
<dbReference type="GO" id="GO:0000050">
    <property type="term" value="P:urea cycle"/>
    <property type="evidence" value="ECO:0007669"/>
    <property type="project" value="UniProtKB-UniPathway"/>
</dbReference>
<dbReference type="CDD" id="cd09989">
    <property type="entry name" value="Arginase"/>
    <property type="match status" value="1"/>
</dbReference>
<dbReference type="FunFam" id="3.40.800.10:FF:000005">
    <property type="entry name" value="Arginase"/>
    <property type="match status" value="1"/>
</dbReference>
<dbReference type="Gene3D" id="3.40.800.10">
    <property type="entry name" value="Ureohydrolase domain"/>
    <property type="match status" value="1"/>
</dbReference>
<dbReference type="InterPro" id="IPR014033">
    <property type="entry name" value="Arginase"/>
</dbReference>
<dbReference type="InterPro" id="IPR006035">
    <property type="entry name" value="Ureohydrolase"/>
</dbReference>
<dbReference type="InterPro" id="IPR023696">
    <property type="entry name" value="Ureohydrolase_dom_sf"/>
</dbReference>
<dbReference type="InterPro" id="IPR020855">
    <property type="entry name" value="Ureohydrolase_Mn_BS"/>
</dbReference>
<dbReference type="NCBIfam" id="TIGR01229">
    <property type="entry name" value="rocF_arginase"/>
    <property type="match status" value="1"/>
</dbReference>
<dbReference type="PANTHER" id="PTHR43782">
    <property type="entry name" value="ARGINASE"/>
    <property type="match status" value="1"/>
</dbReference>
<dbReference type="PANTHER" id="PTHR43782:SF3">
    <property type="entry name" value="ARGINASE"/>
    <property type="match status" value="1"/>
</dbReference>
<dbReference type="Pfam" id="PF00491">
    <property type="entry name" value="Arginase"/>
    <property type="match status" value="1"/>
</dbReference>
<dbReference type="PIRSF" id="PIRSF036979">
    <property type="entry name" value="Arginase"/>
    <property type="match status" value="1"/>
</dbReference>
<dbReference type="PRINTS" id="PR00116">
    <property type="entry name" value="ARGINASE"/>
</dbReference>
<dbReference type="SUPFAM" id="SSF52768">
    <property type="entry name" value="Arginase/deacetylase"/>
    <property type="match status" value="1"/>
</dbReference>
<dbReference type="PROSITE" id="PS01053">
    <property type="entry name" value="ARGINASE_1"/>
    <property type="match status" value="1"/>
</dbReference>
<dbReference type="PROSITE" id="PS51409">
    <property type="entry name" value="ARGINASE_2"/>
    <property type="match status" value="1"/>
</dbReference>
<evidence type="ECO:0000250" key="1">
    <source>
        <dbReference type="UniProtKB" id="P05089"/>
    </source>
</evidence>
<evidence type="ECO:0000250" key="2">
    <source>
        <dbReference type="UniProtKB" id="P78540"/>
    </source>
</evidence>
<evidence type="ECO:0000255" key="3">
    <source>
        <dbReference type="PROSITE-ProRule" id="PRU00742"/>
    </source>
</evidence>
<evidence type="ECO:0000269" key="4">
    <source>
    </source>
</evidence>
<evidence type="ECO:0007744" key="5">
    <source>
        <dbReference type="PDB" id="1CEV"/>
    </source>
</evidence>
<evidence type="ECO:0007744" key="6">
    <source>
        <dbReference type="PDB" id="2CEV"/>
    </source>
</evidence>
<evidence type="ECO:0007744" key="7">
    <source>
        <dbReference type="PDB" id="3CEV"/>
    </source>
</evidence>
<evidence type="ECO:0007744" key="8">
    <source>
        <dbReference type="PDB" id="4CEV"/>
    </source>
</evidence>
<evidence type="ECO:0007744" key="9">
    <source>
        <dbReference type="PDB" id="5CEV"/>
    </source>
</evidence>
<evidence type="ECO:0007829" key="10">
    <source>
        <dbReference type="PDB" id="1CEV"/>
    </source>
</evidence>
<evidence type="ECO:0007829" key="11">
    <source>
        <dbReference type="PDB" id="2CEV"/>
    </source>
</evidence>
<sequence length="299" mass="32433">MKPISIIGVPMDLGQTRRGVDMGPSAMRYAGVIERLERLHYDIEDLGDIPIGKAERLHEQGDSRLRNLKAVAEANEKLAAAVDQVVQRGRFPLVLGGDHSIAIGTLAGVAKHYERLGVIWYDAHGDVNTAETSPSGNIHGMPLAASLGFGHPALTQIGGYSPKIKPEHVVLIGVRSLDEGEKKFIREKGIKIYTMHEVDRLGMTRVMEETIAYLKERTDGVHLSLDLDGLDPSDAPGVGTPVIGGLTYRESHLAMEMLAEAQIITSAEFVEVNPILDERNKTASVAVALMGSLFGEKLM</sequence>
<proteinExistence type="evidence at protein level"/>
<keyword id="KW-0002">3D-structure</keyword>
<keyword id="KW-0056">Arginine metabolism</keyword>
<keyword id="KW-0378">Hydrolase</keyword>
<keyword id="KW-0464">Manganese</keyword>
<keyword id="KW-0479">Metal-binding</keyword>
<comment type="function">
    <text>Controls arginine catabolism.</text>
</comment>
<comment type="catalytic activity">
    <reaction evidence="2">
        <text>L-arginine + H2O = urea + L-ornithine</text>
        <dbReference type="Rhea" id="RHEA:20569"/>
        <dbReference type="ChEBI" id="CHEBI:15377"/>
        <dbReference type="ChEBI" id="CHEBI:16199"/>
        <dbReference type="ChEBI" id="CHEBI:32682"/>
        <dbReference type="ChEBI" id="CHEBI:46911"/>
        <dbReference type="EC" id="3.5.3.1"/>
    </reaction>
</comment>
<comment type="cofactor">
    <cofactor evidence="3 4">
        <name>Mn(2+)</name>
        <dbReference type="ChEBI" id="CHEBI:29035"/>
    </cofactor>
    <text evidence="3 4">Binds 2 manganese ions per subunit.</text>
</comment>
<comment type="pathway">
    <text evidence="1">Nitrogen metabolism; urea cycle; L-ornithine and urea from L-arginine: step 1/1.</text>
</comment>
<comment type="subunit">
    <text evidence="4">Homohexamer.</text>
</comment>
<comment type="similarity">
    <text evidence="3">Belongs to the arginase family.</text>
</comment>